<name>MTGA_PSE14</name>
<comment type="function">
    <text evidence="1">Peptidoglycan polymerase that catalyzes glycan chain elongation from lipid-linked precursors.</text>
</comment>
<comment type="catalytic activity">
    <reaction evidence="1">
        <text>[GlcNAc-(1-&gt;4)-Mur2Ac(oyl-L-Ala-gamma-D-Glu-L-Lys-D-Ala-D-Ala)](n)-di-trans,octa-cis-undecaprenyl diphosphate + beta-D-GlcNAc-(1-&gt;4)-Mur2Ac(oyl-L-Ala-gamma-D-Glu-L-Lys-D-Ala-D-Ala)-di-trans,octa-cis-undecaprenyl diphosphate = [GlcNAc-(1-&gt;4)-Mur2Ac(oyl-L-Ala-gamma-D-Glu-L-Lys-D-Ala-D-Ala)](n+1)-di-trans,octa-cis-undecaprenyl diphosphate + di-trans,octa-cis-undecaprenyl diphosphate + H(+)</text>
        <dbReference type="Rhea" id="RHEA:23708"/>
        <dbReference type="Rhea" id="RHEA-COMP:9602"/>
        <dbReference type="Rhea" id="RHEA-COMP:9603"/>
        <dbReference type="ChEBI" id="CHEBI:15378"/>
        <dbReference type="ChEBI" id="CHEBI:58405"/>
        <dbReference type="ChEBI" id="CHEBI:60033"/>
        <dbReference type="ChEBI" id="CHEBI:78435"/>
        <dbReference type="EC" id="2.4.99.28"/>
    </reaction>
</comment>
<comment type="pathway">
    <text evidence="1">Cell wall biogenesis; peptidoglycan biosynthesis.</text>
</comment>
<comment type="subcellular location">
    <subcellularLocation>
        <location evidence="1">Cell inner membrane</location>
        <topology evidence="1">Single-pass membrane protein</topology>
    </subcellularLocation>
</comment>
<comment type="similarity">
    <text evidence="1">Belongs to the glycosyltransferase 51 family.</text>
</comment>
<dbReference type="EC" id="2.4.99.28" evidence="1"/>
<dbReference type="EMBL" id="CP000058">
    <property type="protein sequence ID" value="AAZ33155.1"/>
    <property type="molecule type" value="Genomic_DNA"/>
</dbReference>
<dbReference type="RefSeq" id="WP_002555628.1">
    <property type="nucleotide sequence ID" value="NC_005773.3"/>
</dbReference>
<dbReference type="SMR" id="Q48CL6"/>
<dbReference type="CAZy" id="GT51">
    <property type="family name" value="Glycosyltransferase Family 51"/>
</dbReference>
<dbReference type="GeneID" id="61872307"/>
<dbReference type="KEGG" id="psp:PSPPH_4777"/>
<dbReference type="eggNOG" id="COG0744">
    <property type="taxonomic scope" value="Bacteria"/>
</dbReference>
<dbReference type="HOGENOM" id="CLU_006354_1_1_6"/>
<dbReference type="UniPathway" id="UPA00219"/>
<dbReference type="Proteomes" id="UP000000551">
    <property type="component" value="Chromosome"/>
</dbReference>
<dbReference type="GO" id="GO:0009274">
    <property type="term" value="C:peptidoglycan-based cell wall"/>
    <property type="evidence" value="ECO:0007669"/>
    <property type="project" value="InterPro"/>
</dbReference>
<dbReference type="GO" id="GO:0005886">
    <property type="term" value="C:plasma membrane"/>
    <property type="evidence" value="ECO:0007669"/>
    <property type="project" value="UniProtKB-SubCell"/>
</dbReference>
<dbReference type="GO" id="GO:0016763">
    <property type="term" value="F:pentosyltransferase activity"/>
    <property type="evidence" value="ECO:0007669"/>
    <property type="project" value="InterPro"/>
</dbReference>
<dbReference type="GO" id="GO:0008955">
    <property type="term" value="F:peptidoglycan glycosyltransferase activity"/>
    <property type="evidence" value="ECO:0007669"/>
    <property type="project" value="UniProtKB-UniRule"/>
</dbReference>
<dbReference type="GO" id="GO:0071555">
    <property type="term" value="P:cell wall organization"/>
    <property type="evidence" value="ECO:0007669"/>
    <property type="project" value="UniProtKB-KW"/>
</dbReference>
<dbReference type="GO" id="GO:0009252">
    <property type="term" value="P:peptidoglycan biosynthetic process"/>
    <property type="evidence" value="ECO:0007669"/>
    <property type="project" value="UniProtKB-UniRule"/>
</dbReference>
<dbReference type="GO" id="GO:0008360">
    <property type="term" value="P:regulation of cell shape"/>
    <property type="evidence" value="ECO:0007669"/>
    <property type="project" value="UniProtKB-KW"/>
</dbReference>
<dbReference type="Gene3D" id="1.10.3810.10">
    <property type="entry name" value="Biosynthetic peptidoglycan transglycosylase-like"/>
    <property type="match status" value="1"/>
</dbReference>
<dbReference type="HAMAP" id="MF_00766">
    <property type="entry name" value="PGT_MtgA"/>
    <property type="match status" value="1"/>
</dbReference>
<dbReference type="InterPro" id="IPR001264">
    <property type="entry name" value="Glyco_trans_51"/>
</dbReference>
<dbReference type="InterPro" id="IPR023346">
    <property type="entry name" value="Lysozyme-like_dom_sf"/>
</dbReference>
<dbReference type="InterPro" id="IPR036950">
    <property type="entry name" value="PBP_transglycosylase"/>
</dbReference>
<dbReference type="InterPro" id="IPR011812">
    <property type="entry name" value="Pep_trsgly"/>
</dbReference>
<dbReference type="NCBIfam" id="TIGR02070">
    <property type="entry name" value="mono_pep_trsgly"/>
    <property type="match status" value="1"/>
</dbReference>
<dbReference type="PANTHER" id="PTHR30400:SF0">
    <property type="entry name" value="BIOSYNTHETIC PEPTIDOGLYCAN TRANSGLYCOSYLASE"/>
    <property type="match status" value="1"/>
</dbReference>
<dbReference type="PANTHER" id="PTHR30400">
    <property type="entry name" value="MONOFUNCTIONAL BIOSYNTHETIC PEPTIDOGLYCAN TRANSGLYCOSYLASE"/>
    <property type="match status" value="1"/>
</dbReference>
<dbReference type="Pfam" id="PF00912">
    <property type="entry name" value="Transgly"/>
    <property type="match status" value="1"/>
</dbReference>
<dbReference type="SUPFAM" id="SSF53955">
    <property type="entry name" value="Lysozyme-like"/>
    <property type="match status" value="1"/>
</dbReference>
<organism>
    <name type="scientific">Pseudomonas savastanoi pv. phaseolicola (strain 1448A / Race 6)</name>
    <name type="common">Pseudomonas syringae pv. phaseolicola (strain 1448A / Race 6)</name>
    <dbReference type="NCBI Taxonomy" id="264730"/>
    <lineage>
        <taxon>Bacteria</taxon>
        <taxon>Pseudomonadati</taxon>
        <taxon>Pseudomonadota</taxon>
        <taxon>Gammaproteobacteria</taxon>
        <taxon>Pseudomonadales</taxon>
        <taxon>Pseudomonadaceae</taxon>
        <taxon>Pseudomonas</taxon>
    </lineage>
</organism>
<evidence type="ECO:0000255" key="1">
    <source>
        <dbReference type="HAMAP-Rule" id="MF_00766"/>
    </source>
</evidence>
<reference key="1">
    <citation type="journal article" date="2005" name="J. Bacteriol.">
        <title>Whole-genome sequence analysis of Pseudomonas syringae pv. phaseolicola 1448A reveals divergence among pathovars in genes involved in virulence and transposition.</title>
        <authorList>
            <person name="Joardar V."/>
            <person name="Lindeberg M."/>
            <person name="Jackson R.W."/>
            <person name="Selengut J."/>
            <person name="Dodson R."/>
            <person name="Brinkac L.M."/>
            <person name="Daugherty S.C."/>
            <person name="DeBoy R.T."/>
            <person name="Durkin A.S."/>
            <person name="Gwinn Giglio M."/>
            <person name="Madupu R."/>
            <person name="Nelson W.C."/>
            <person name="Rosovitz M.J."/>
            <person name="Sullivan S.A."/>
            <person name="Crabtree J."/>
            <person name="Creasy T."/>
            <person name="Davidsen T.M."/>
            <person name="Haft D.H."/>
            <person name="Zafar N."/>
            <person name="Zhou L."/>
            <person name="Halpin R."/>
            <person name="Holley T."/>
            <person name="Khouri H.M."/>
            <person name="Feldblyum T.V."/>
            <person name="White O."/>
            <person name="Fraser C.M."/>
            <person name="Chatterjee A.K."/>
            <person name="Cartinhour S."/>
            <person name="Schneider D."/>
            <person name="Mansfield J.W."/>
            <person name="Collmer A."/>
            <person name="Buell R."/>
        </authorList>
    </citation>
    <scope>NUCLEOTIDE SEQUENCE [LARGE SCALE GENOMIC DNA]</scope>
    <source>
        <strain>1448A / Race 6</strain>
    </source>
</reference>
<accession>Q48CL6</accession>
<proteinExistence type="inferred from homology"/>
<keyword id="KW-0997">Cell inner membrane</keyword>
<keyword id="KW-1003">Cell membrane</keyword>
<keyword id="KW-0133">Cell shape</keyword>
<keyword id="KW-0961">Cell wall biogenesis/degradation</keyword>
<keyword id="KW-0328">Glycosyltransferase</keyword>
<keyword id="KW-0472">Membrane</keyword>
<keyword id="KW-0573">Peptidoglycan synthesis</keyword>
<keyword id="KW-0808">Transferase</keyword>
<keyword id="KW-0812">Transmembrane</keyword>
<keyword id="KW-1133">Transmembrane helix</keyword>
<protein>
    <recommendedName>
        <fullName evidence="1">Biosynthetic peptidoglycan transglycosylase</fullName>
        <ecNumber evidence="1">2.4.99.28</ecNumber>
    </recommendedName>
    <alternativeName>
        <fullName evidence="1">Glycan polymerase</fullName>
    </alternativeName>
    <alternativeName>
        <fullName evidence="1">Peptidoglycan glycosyltransferase MtgA</fullName>
        <shortName evidence="1">PGT</shortName>
    </alternativeName>
</protein>
<gene>
    <name evidence="1" type="primary">mtgA</name>
    <name type="ordered locus">PSPPH_4777</name>
</gene>
<feature type="chain" id="PRO_0000257681" description="Biosynthetic peptidoglycan transglycosylase">
    <location>
        <begin position="1"/>
        <end position="236"/>
    </location>
</feature>
<feature type="transmembrane region" description="Helical" evidence="1">
    <location>
        <begin position="12"/>
        <end position="31"/>
    </location>
</feature>
<sequence length="236" mass="26943">MLQFILRRIVKALLWFAAGSVLVVLVLRWVPPPGTALMVERKVESWVDGEPIDLQRDWEPWDRISDNLKIAVIAGEDQKFAEHWGFDVDAIQAAILHNERGGSIRGASTLSQQVSKNLFLWSGRSYLRKGLEAWFTMLIELLWSKERILEVYLNSVEWDEGVFGAQAAAQHHFRTNASALSVQQASYLAAVLPNPREWSASHPSSYVSRRAGWIRQQMRQLGGDEYLQGLNSSRRW</sequence>